<comment type="function">
    <text evidence="1">Transport of potassium into the cell. Likely operates as a K(+):H(+) symporter.</text>
</comment>
<comment type="catalytic activity">
    <reaction evidence="1">
        <text>K(+)(in) + H(+)(in) = K(+)(out) + H(+)(out)</text>
        <dbReference type="Rhea" id="RHEA:28490"/>
        <dbReference type="ChEBI" id="CHEBI:15378"/>
        <dbReference type="ChEBI" id="CHEBI:29103"/>
    </reaction>
    <physiologicalReaction direction="right-to-left" evidence="1">
        <dbReference type="Rhea" id="RHEA:28492"/>
    </physiologicalReaction>
</comment>
<comment type="subcellular location">
    <subcellularLocation>
        <location evidence="1">Cell membrane</location>
        <topology evidence="1">Multi-pass membrane protein</topology>
    </subcellularLocation>
</comment>
<comment type="similarity">
    <text evidence="1">Belongs to the HAK/KUP transporter (TC 2.A.72) family.</text>
</comment>
<comment type="sequence caution" evidence="2">
    <conflict type="erroneous initiation">
        <sequence resource="EMBL-CDS" id="BAF40303"/>
    </conflict>
</comment>
<keyword id="KW-1003">Cell membrane</keyword>
<keyword id="KW-0406">Ion transport</keyword>
<keyword id="KW-0472">Membrane</keyword>
<keyword id="KW-0630">Potassium</keyword>
<keyword id="KW-0633">Potassium transport</keyword>
<keyword id="KW-1185">Reference proteome</keyword>
<keyword id="KW-0769">Symport</keyword>
<keyword id="KW-0812">Transmembrane</keyword>
<keyword id="KW-1133">Transmembrane helix</keyword>
<keyword id="KW-0813">Transport</keyword>
<feature type="chain" id="PRO_0000292616" description="Probable potassium transport system protein Kup">
    <location>
        <begin position="1"/>
        <end position="649"/>
    </location>
</feature>
<feature type="transmembrane region" description="Helical" evidence="1">
    <location>
        <begin position="1"/>
        <end position="21"/>
    </location>
</feature>
<feature type="transmembrane region" description="Helical" evidence="1">
    <location>
        <begin position="42"/>
        <end position="62"/>
    </location>
</feature>
<feature type="transmembrane region" description="Helical" evidence="1">
    <location>
        <begin position="84"/>
        <end position="104"/>
    </location>
</feature>
<feature type="transmembrane region" description="Helical" evidence="1">
    <location>
        <begin position="126"/>
        <end position="146"/>
    </location>
</feature>
<feature type="transmembrane region" description="Helical" evidence="1">
    <location>
        <begin position="159"/>
        <end position="179"/>
    </location>
</feature>
<feature type="transmembrane region" description="Helical" evidence="1">
    <location>
        <begin position="195"/>
        <end position="215"/>
    </location>
</feature>
<feature type="transmembrane region" description="Helical" evidence="1">
    <location>
        <begin position="235"/>
        <end position="255"/>
    </location>
</feature>
<feature type="transmembrane region" description="Helical" evidence="1">
    <location>
        <begin position="286"/>
        <end position="306"/>
    </location>
</feature>
<feature type="transmembrane region" description="Helical" evidence="1">
    <location>
        <begin position="334"/>
        <end position="354"/>
    </location>
</feature>
<feature type="transmembrane region" description="Helical" evidence="1">
    <location>
        <begin position="364"/>
        <end position="384"/>
    </location>
</feature>
<feature type="transmembrane region" description="Helical" evidence="1">
    <location>
        <begin position="390"/>
        <end position="410"/>
    </location>
</feature>
<feature type="transmembrane region" description="Helical" evidence="1">
    <location>
        <begin position="414"/>
        <end position="434"/>
    </location>
</feature>
<protein>
    <recommendedName>
        <fullName evidence="1">Probable potassium transport system protein Kup</fullName>
    </recommendedName>
</protein>
<sequence length="649" mass="72281">MAIVALGVVYGDIGTSPLYTMQTFLNGQGGLAHTDRAAVLGILSLVFWSITLITTVKYVFIAMRIDNNGEGGIFALYSLIRKYGAWLAIPAMLGGAAFLADSVLTPAVSISSAVEGLETLPLLEPIMSGNKELTLMITIVIIVCLFAVQSRGTERIGRTFGTVVMIWFSFLAVVGLVNLSSDWSVLEALNPVYGVEFLFSHHNAAGLAVMGTVFLSTTGAEALYSDMGHVGRGNIYFTWPFIKIALVFCYFGQGAWMLNHWDDTAYNHMHGLNPFFEMMTPSVRYVAVLLSVCAGVIASQALITGAYTMVSEATRLNWMPHLQVRYPARTRGQLYIPVVNAVLCVSTLLVLAMFRDSEHISAAYGLALTVTMITTTILLAVYIWHDGKRVGAVVFTVVFLAIQFLFFFASMAKFLHGGWFTMLLTLAILLIMYTWNEGTKLERAQRRHMQPADCVPVLKRLHEDDSIPYFADNIVYLTSDPEMKRVDTDIFFSIFADHPKRARAWWAVSVETSDNPFTREYSVENFGTDFLFRVRIRLGFKVSQSIPAYIHQIMNDLSKSGDLPKQTTRYPKLDADPNIGPIRYVLIHKALMPESKVSQKGAISLQIKYAIRHLAGSPVKWFGLAPYNPLIEIQPLFLATERPPRLKRV</sequence>
<evidence type="ECO:0000255" key="1">
    <source>
        <dbReference type="HAMAP-Rule" id="MF_01522"/>
    </source>
</evidence>
<evidence type="ECO:0000305" key="2"/>
<name>KUP_BIFAA</name>
<accession>A1A3M0</accession>
<reference key="1">
    <citation type="submission" date="2006-12" db="EMBL/GenBank/DDBJ databases">
        <title>Bifidobacterium adolescentis complete genome sequence.</title>
        <authorList>
            <person name="Suzuki T."/>
            <person name="Tsuda Y."/>
            <person name="Kanou N."/>
            <person name="Inoue T."/>
            <person name="Kumazaki K."/>
            <person name="Nagano S."/>
            <person name="Hirai S."/>
            <person name="Tanaka K."/>
            <person name="Watanabe K."/>
        </authorList>
    </citation>
    <scope>NUCLEOTIDE SEQUENCE [LARGE SCALE GENOMIC DNA]</scope>
    <source>
        <strain>ATCC 15703 / DSM 20083 / NCTC 11814 / E194a</strain>
    </source>
</reference>
<gene>
    <name evidence="1" type="primary">kup</name>
    <name type="ordered locus">BAD_1522</name>
</gene>
<organism>
    <name type="scientific">Bifidobacterium adolescentis (strain ATCC 15703 / DSM 20083 / NCTC 11814 / E194a)</name>
    <dbReference type="NCBI Taxonomy" id="367928"/>
    <lineage>
        <taxon>Bacteria</taxon>
        <taxon>Bacillati</taxon>
        <taxon>Actinomycetota</taxon>
        <taxon>Actinomycetes</taxon>
        <taxon>Bifidobacteriales</taxon>
        <taxon>Bifidobacteriaceae</taxon>
        <taxon>Bifidobacterium</taxon>
    </lineage>
</organism>
<dbReference type="EMBL" id="AP009256">
    <property type="protein sequence ID" value="BAF40303.1"/>
    <property type="status" value="ALT_INIT"/>
    <property type="molecule type" value="Genomic_DNA"/>
</dbReference>
<dbReference type="RefSeq" id="WP_011743804.1">
    <property type="nucleotide sequence ID" value="NC_008618.1"/>
</dbReference>
<dbReference type="STRING" id="367928.BAD_1522"/>
<dbReference type="PaxDb" id="1680-BADO_1489"/>
<dbReference type="GeneID" id="4556272"/>
<dbReference type="KEGG" id="bad:BAD_1522"/>
<dbReference type="HOGENOM" id="CLU_008142_4_1_11"/>
<dbReference type="Proteomes" id="UP000008702">
    <property type="component" value="Chromosome"/>
</dbReference>
<dbReference type="GO" id="GO:0005886">
    <property type="term" value="C:plasma membrane"/>
    <property type="evidence" value="ECO:0007669"/>
    <property type="project" value="UniProtKB-SubCell"/>
</dbReference>
<dbReference type="GO" id="GO:0015079">
    <property type="term" value="F:potassium ion transmembrane transporter activity"/>
    <property type="evidence" value="ECO:0007669"/>
    <property type="project" value="UniProtKB-UniRule"/>
</dbReference>
<dbReference type="GO" id="GO:0015293">
    <property type="term" value="F:symporter activity"/>
    <property type="evidence" value="ECO:0007669"/>
    <property type="project" value="UniProtKB-UniRule"/>
</dbReference>
<dbReference type="HAMAP" id="MF_01522">
    <property type="entry name" value="Kup"/>
    <property type="match status" value="1"/>
</dbReference>
<dbReference type="InterPro" id="IPR003855">
    <property type="entry name" value="K+_transporter"/>
</dbReference>
<dbReference type="InterPro" id="IPR053952">
    <property type="entry name" value="K_trans_C"/>
</dbReference>
<dbReference type="InterPro" id="IPR053951">
    <property type="entry name" value="K_trans_N"/>
</dbReference>
<dbReference type="InterPro" id="IPR023051">
    <property type="entry name" value="Kup"/>
</dbReference>
<dbReference type="PANTHER" id="PTHR30540:SF83">
    <property type="entry name" value="K+ POTASSIUM TRANSPORTER"/>
    <property type="match status" value="1"/>
</dbReference>
<dbReference type="PANTHER" id="PTHR30540">
    <property type="entry name" value="OSMOTIC STRESS POTASSIUM TRANSPORTER"/>
    <property type="match status" value="1"/>
</dbReference>
<dbReference type="Pfam" id="PF02705">
    <property type="entry name" value="K_trans"/>
    <property type="match status" value="1"/>
</dbReference>
<dbReference type="Pfam" id="PF22776">
    <property type="entry name" value="K_trans_C"/>
    <property type="match status" value="1"/>
</dbReference>
<proteinExistence type="inferred from homology"/>